<reference key="1">
    <citation type="journal article" date="1992" name="Phytopathology">
        <title>Cloning, identification and partial sequencing of a new geminivirus infecting Brassicaceae.</title>
        <authorList>
            <person name="Abouzid A.M."/>
            <person name="Hiebert E."/>
            <person name="Strandberg J.O."/>
        </authorList>
    </citation>
    <scope>NUCLEOTIDE SEQUENCE [GENOMIC DNA]</scope>
</reference>
<reference key="2">
    <citation type="submission" date="2001-08" db="EMBL/GenBank/DDBJ databases">
        <authorList>
            <person name="Abouzid A.M."/>
            <person name="Hiebert E."/>
            <person name="Strandberg J.O."/>
        </authorList>
    </citation>
    <scope>SEQUENCE REVISION</scope>
</reference>
<gene>
    <name type="ORF">BC1</name>
    <name type="ORF">BL1</name>
</gene>
<keyword id="KW-0238">DNA-binding</keyword>
<keyword id="KW-1032">Host cell membrane</keyword>
<keyword id="KW-1038">Host endoplasmic reticulum</keyword>
<keyword id="KW-1043">Host membrane</keyword>
<keyword id="KW-1044">Host microsome</keyword>
<keyword id="KW-0472">Membrane</keyword>
<keyword id="KW-0597">Phosphoprotein</keyword>
<keyword id="KW-0813">Transport</keyword>
<keyword id="KW-0916">Viral movement protein</keyword>
<sequence>MNSQLANAPNAFNYIESHRDEYQLSHDLTEILLQFPSTAAQFTARLNRSCMKIDHCVIEYRQQVPINATGSVIVEIHDKRMTDDESLQASWTFPLRCNIDLHYFSSSFFSLKDPIPWKLYYRVSDTNVHQRTHFAKFKGKLKLSTAKHSVDIPFRAPTVKIHSKQFSHRDVDFSHVDYGRWERKTLRSKSLSRIGLTGPGPIELQPGDSWASRSTIGFPNPHTESEVENALHPYRELNLLGTSALDPGDSASQAGLQRAQSTITMSVAQLSELVRTTVQECINNNCNPPQPKSLQ</sequence>
<organismHost>
    <name type="scientific">Brassica oleracea</name>
    <name type="common">Wild cabbage</name>
    <dbReference type="NCBI Taxonomy" id="3712"/>
</organismHost>
<evidence type="ECO:0000250" key="1"/>
<evidence type="ECO:0000305" key="2"/>
<comment type="function">
    <text evidence="1">Transports viral genome to neighboring plant cells directly through plasmosdesmata, without any budding. The movement protein allows efficient cell to cell propagation, by bypassing the host cell wall barrier. Begomovirus genome is shuttled out of nucleus by Nuclear shuttle protein (NSP) and the movement protein transports the DNA-NSP complex to cell plasmodesmata and facilitates further movement across the cell wall (By similarity).</text>
</comment>
<comment type="subunit">
    <text evidence="1">Binds to dimeric supercoiled plasmid DNA.</text>
</comment>
<comment type="subcellular location">
    <subcellularLocation>
        <location evidence="1">Host cell membrane</location>
        <topology evidence="1">Peripheral membrane protein</topology>
        <orientation evidence="1">Cytoplasmic side</orientation>
    </subcellularLocation>
    <subcellularLocation>
        <location evidence="1">Host microsome membrane</location>
        <topology evidence="1">Peripheral membrane protein</topology>
        <orientation evidence="1">Cytoplasmic side</orientation>
    </subcellularLocation>
    <subcellularLocation>
        <location evidence="1">Host endoplasmic reticulum membrane</location>
        <topology evidence="1">Peripheral membrane protein</topology>
        <orientation evidence="1">Cytoplasmic side</orientation>
    </subcellularLocation>
    <text evidence="1">Found on ER-derived vesicles.</text>
</comment>
<comment type="PTM">
    <text evidence="1">Phosphorylated.</text>
</comment>
<comment type="similarity">
    <text evidence="2">Belongs to the begomovirus movement protein BC1 family.</text>
</comment>
<organism>
    <name type="scientific">Cabbage leaf curl virus (isolate Jamaica)</name>
    <name type="common">CaLCuV</name>
    <dbReference type="NCBI Taxonomy" id="345184"/>
    <lineage>
        <taxon>Viruses</taxon>
        <taxon>Monodnaviria</taxon>
        <taxon>Shotokuvirae</taxon>
        <taxon>Cressdnaviricota</taxon>
        <taxon>Repensiviricetes</taxon>
        <taxon>Geplafuvirales</taxon>
        <taxon>Geminiviridae</taxon>
        <taxon>Begomovirus</taxon>
    </lineage>
</organism>
<accession>Q96707</accession>
<protein>
    <recommendedName>
        <fullName>Movement protein BC1</fullName>
    </recommendedName>
    <alternativeName>
        <fullName>Movement protein BL1</fullName>
    </alternativeName>
</protein>
<proteinExistence type="inferred from homology"/>
<name>MVP_CALCV</name>
<feature type="chain" id="PRO_0000323696" description="Movement protein BC1">
    <location>
        <begin position="1"/>
        <end position="295"/>
    </location>
</feature>
<dbReference type="EMBL" id="U65530">
    <property type="protein sequence ID" value="AAB17966.2"/>
    <property type="molecule type" value="Genomic_DNA"/>
</dbReference>
<dbReference type="SMR" id="Q96707"/>
<dbReference type="KEGG" id="vg:993363"/>
<dbReference type="Proteomes" id="UP000007622">
    <property type="component" value="Genome"/>
</dbReference>
<dbReference type="GO" id="GO:0044167">
    <property type="term" value="C:host cell endoplasmic reticulum membrane"/>
    <property type="evidence" value="ECO:0007669"/>
    <property type="project" value="UniProtKB-SubCell"/>
</dbReference>
<dbReference type="GO" id="GO:0020002">
    <property type="term" value="C:host cell plasma membrane"/>
    <property type="evidence" value="ECO:0007669"/>
    <property type="project" value="UniProtKB-SubCell"/>
</dbReference>
<dbReference type="GO" id="GO:0016020">
    <property type="term" value="C:membrane"/>
    <property type="evidence" value="ECO:0007669"/>
    <property type="project" value="UniProtKB-KW"/>
</dbReference>
<dbReference type="GO" id="GO:0003677">
    <property type="term" value="F:DNA binding"/>
    <property type="evidence" value="ECO:0007669"/>
    <property type="project" value="UniProtKB-KW"/>
</dbReference>
<dbReference type="GO" id="GO:0046740">
    <property type="term" value="P:transport of virus in host, cell to cell"/>
    <property type="evidence" value="ECO:0007669"/>
    <property type="project" value="UniProtKB-KW"/>
</dbReference>
<dbReference type="InterPro" id="IPR000211">
    <property type="entry name" value="Gemini_BL"/>
</dbReference>
<dbReference type="Pfam" id="PF00845">
    <property type="entry name" value="Gemini_BL1"/>
    <property type="match status" value="1"/>
</dbReference>